<proteinExistence type="inferred from homology"/>
<organism>
    <name type="scientific">Archaeoglobus fulgidus (strain ATCC 49558 / DSM 4304 / JCM 9628 / NBRC 100126 / VC-16)</name>
    <dbReference type="NCBI Taxonomy" id="224325"/>
    <lineage>
        <taxon>Archaea</taxon>
        <taxon>Methanobacteriati</taxon>
        <taxon>Methanobacteriota</taxon>
        <taxon>Archaeoglobi</taxon>
        <taxon>Archaeoglobales</taxon>
        <taxon>Archaeoglobaceae</taxon>
        <taxon>Archaeoglobus</taxon>
    </lineage>
</organism>
<sequence>MLRTVKLNAGYKELHILFDVDADIKKNSITAVVGPNGSGKSTLLKSIFGLATVHSGQVFLNGGEITSLPPHTRTKLGIAYLPQTDNVFANLTVEENLKIAAYTVDKEEVKDRIDAALDAFPELRAFMKRKAGTLSGGERQMLAMATALVRKANVLMLDEPTAQLSPKFAEIIFDRILKLRDDLKLTILLVEQNVQRALEISDNAYLLVSGRVAFNGTANELLEHEKFEKLCMGIVD</sequence>
<gene>
    <name type="primary">livF</name>
    <name type="ordered locus">AF_1389</name>
</gene>
<protein>
    <recommendedName>
        <fullName>Probable branched-chain amino acid transport ATP-binding protein LivF</fullName>
    </recommendedName>
</protein>
<dbReference type="EMBL" id="AE000782">
    <property type="protein sequence ID" value="AAB89856.1"/>
    <property type="molecule type" value="Genomic_DNA"/>
</dbReference>
<dbReference type="PIR" id="D69423">
    <property type="entry name" value="D69423"/>
</dbReference>
<dbReference type="RefSeq" id="WP_010878886.1">
    <property type="nucleotide sequence ID" value="NC_000917.1"/>
</dbReference>
<dbReference type="SMR" id="O28882"/>
<dbReference type="STRING" id="224325.AF_1389"/>
<dbReference type="PaxDb" id="224325-AF_1389"/>
<dbReference type="EnsemblBacteria" id="AAB89856">
    <property type="protein sequence ID" value="AAB89856"/>
    <property type="gene ID" value="AF_1389"/>
</dbReference>
<dbReference type="GeneID" id="1484613"/>
<dbReference type="KEGG" id="afu:AF_1389"/>
<dbReference type="eggNOG" id="arCOG00924">
    <property type="taxonomic scope" value="Archaea"/>
</dbReference>
<dbReference type="HOGENOM" id="CLU_000604_1_2_2"/>
<dbReference type="OrthoDB" id="97750at2157"/>
<dbReference type="PhylomeDB" id="O28882"/>
<dbReference type="Proteomes" id="UP000002199">
    <property type="component" value="Chromosome"/>
</dbReference>
<dbReference type="GO" id="GO:0005524">
    <property type="term" value="F:ATP binding"/>
    <property type="evidence" value="ECO:0007669"/>
    <property type="project" value="UniProtKB-KW"/>
</dbReference>
<dbReference type="GO" id="GO:0016887">
    <property type="term" value="F:ATP hydrolysis activity"/>
    <property type="evidence" value="ECO:0007669"/>
    <property type="project" value="InterPro"/>
</dbReference>
<dbReference type="GO" id="GO:0015658">
    <property type="term" value="F:branched-chain amino acid transmembrane transporter activity"/>
    <property type="evidence" value="ECO:0007669"/>
    <property type="project" value="TreeGrafter"/>
</dbReference>
<dbReference type="GO" id="GO:0015807">
    <property type="term" value="P:L-amino acid transport"/>
    <property type="evidence" value="ECO:0007669"/>
    <property type="project" value="TreeGrafter"/>
</dbReference>
<dbReference type="CDD" id="cd03224">
    <property type="entry name" value="ABC_TM1139_LivF_branched"/>
    <property type="match status" value="1"/>
</dbReference>
<dbReference type="Gene3D" id="3.40.50.300">
    <property type="entry name" value="P-loop containing nucleotide triphosphate hydrolases"/>
    <property type="match status" value="1"/>
</dbReference>
<dbReference type="InterPro" id="IPR003593">
    <property type="entry name" value="AAA+_ATPase"/>
</dbReference>
<dbReference type="InterPro" id="IPR003439">
    <property type="entry name" value="ABC_transporter-like_ATP-bd"/>
</dbReference>
<dbReference type="InterPro" id="IPR017871">
    <property type="entry name" value="ABC_transporter-like_CS"/>
</dbReference>
<dbReference type="InterPro" id="IPR052156">
    <property type="entry name" value="BCAA_Transport_ATP-bd_LivF"/>
</dbReference>
<dbReference type="InterPro" id="IPR027417">
    <property type="entry name" value="P-loop_NTPase"/>
</dbReference>
<dbReference type="PANTHER" id="PTHR43820:SF7">
    <property type="entry name" value="BRANCHED-CHAIN AMINO ACID TRANSPORT ATP-BINDING PROTEIN LIVF-RELATED"/>
    <property type="match status" value="1"/>
</dbReference>
<dbReference type="PANTHER" id="PTHR43820">
    <property type="entry name" value="HIGH-AFFINITY BRANCHED-CHAIN AMINO ACID TRANSPORT ATP-BINDING PROTEIN LIVF"/>
    <property type="match status" value="1"/>
</dbReference>
<dbReference type="Pfam" id="PF00005">
    <property type="entry name" value="ABC_tran"/>
    <property type="match status" value="1"/>
</dbReference>
<dbReference type="SMART" id="SM00382">
    <property type="entry name" value="AAA"/>
    <property type="match status" value="1"/>
</dbReference>
<dbReference type="SUPFAM" id="SSF52540">
    <property type="entry name" value="P-loop containing nucleoside triphosphate hydrolases"/>
    <property type="match status" value="1"/>
</dbReference>
<dbReference type="PROSITE" id="PS00211">
    <property type="entry name" value="ABC_TRANSPORTER_1"/>
    <property type="match status" value="1"/>
</dbReference>
<dbReference type="PROSITE" id="PS50893">
    <property type="entry name" value="ABC_TRANSPORTER_2"/>
    <property type="match status" value="1"/>
</dbReference>
<reference key="1">
    <citation type="journal article" date="1997" name="Nature">
        <title>The complete genome sequence of the hyperthermophilic, sulphate-reducing archaeon Archaeoglobus fulgidus.</title>
        <authorList>
            <person name="Klenk H.-P."/>
            <person name="Clayton R.A."/>
            <person name="Tomb J.-F."/>
            <person name="White O."/>
            <person name="Nelson K.E."/>
            <person name="Ketchum K.A."/>
            <person name="Dodson R.J."/>
            <person name="Gwinn M.L."/>
            <person name="Hickey E.K."/>
            <person name="Peterson J.D."/>
            <person name="Richardson D.L."/>
            <person name="Kerlavage A.R."/>
            <person name="Graham D.E."/>
            <person name="Kyrpides N.C."/>
            <person name="Fleischmann R.D."/>
            <person name="Quackenbush J."/>
            <person name="Lee N.H."/>
            <person name="Sutton G.G."/>
            <person name="Gill S.R."/>
            <person name="Kirkness E.F."/>
            <person name="Dougherty B.A."/>
            <person name="McKenney K."/>
            <person name="Adams M.D."/>
            <person name="Loftus B.J."/>
            <person name="Peterson S.N."/>
            <person name="Reich C.I."/>
            <person name="McNeil L.K."/>
            <person name="Badger J.H."/>
            <person name="Glodek A."/>
            <person name="Zhou L."/>
            <person name="Overbeek R."/>
            <person name="Gocayne J.D."/>
            <person name="Weidman J.F."/>
            <person name="McDonald L.A."/>
            <person name="Utterback T.R."/>
            <person name="Cotton M.D."/>
            <person name="Spriggs T."/>
            <person name="Artiach P."/>
            <person name="Kaine B.P."/>
            <person name="Sykes S.M."/>
            <person name="Sadow P.W."/>
            <person name="D'Andrea K.P."/>
            <person name="Bowman C."/>
            <person name="Fujii C."/>
            <person name="Garland S.A."/>
            <person name="Mason T.M."/>
            <person name="Olsen G.J."/>
            <person name="Fraser C.M."/>
            <person name="Smith H.O."/>
            <person name="Woese C.R."/>
            <person name="Venter J.C."/>
        </authorList>
    </citation>
    <scope>NUCLEOTIDE SEQUENCE [LARGE SCALE GENOMIC DNA]</scope>
    <source>
        <strain>ATCC 49558 / DSM 4304 / JCM 9628 / NBRC 100126 / VC-16</strain>
    </source>
</reference>
<evidence type="ECO:0000255" key="1">
    <source>
        <dbReference type="PROSITE-ProRule" id="PRU00434"/>
    </source>
</evidence>
<evidence type="ECO:0000305" key="2"/>
<accession>O28882</accession>
<feature type="chain" id="PRO_0000092404" description="Probable branched-chain amino acid transport ATP-binding protein LivF">
    <location>
        <begin position="1"/>
        <end position="236"/>
    </location>
</feature>
<feature type="domain" description="ABC transporter" evidence="1">
    <location>
        <begin position="2"/>
        <end position="234"/>
    </location>
</feature>
<feature type="binding site" evidence="1">
    <location>
        <begin position="34"/>
        <end position="41"/>
    </location>
    <ligand>
        <name>ATP</name>
        <dbReference type="ChEBI" id="CHEBI:30616"/>
    </ligand>
</feature>
<keyword id="KW-0029">Amino-acid transport</keyword>
<keyword id="KW-0067">ATP-binding</keyword>
<keyword id="KW-0547">Nucleotide-binding</keyword>
<keyword id="KW-1185">Reference proteome</keyword>
<keyword id="KW-0813">Transport</keyword>
<comment type="function">
    <text>Probable component of a branched-chain amino-acid transport system.</text>
</comment>
<comment type="similarity">
    <text evidence="2">Belongs to the ABC transporter superfamily.</text>
</comment>
<name>LIVF_ARCFU</name>